<reference key="1">
    <citation type="journal article" date="2009" name="J. Bacteriol.">
        <title>Complete genome sequence of the extremophilic Bacillus cereus strain Q1 with industrial applications.</title>
        <authorList>
            <person name="Xiong Z."/>
            <person name="Jiang Y."/>
            <person name="Qi D."/>
            <person name="Lu H."/>
            <person name="Yang F."/>
            <person name="Yang J."/>
            <person name="Chen L."/>
            <person name="Sun L."/>
            <person name="Xu X."/>
            <person name="Xue Y."/>
            <person name="Zhu Y."/>
            <person name="Jin Q."/>
        </authorList>
    </citation>
    <scope>NUCLEOTIDE SEQUENCE [LARGE SCALE GENOMIC DNA]</scope>
    <source>
        <strain>Q1</strain>
    </source>
</reference>
<accession>B9IVD8</accession>
<dbReference type="EC" id="3.1.26.3" evidence="1"/>
<dbReference type="EMBL" id="CP000227">
    <property type="protein sequence ID" value="ACM14062.1"/>
    <property type="molecule type" value="Genomic_DNA"/>
</dbReference>
<dbReference type="SMR" id="B9IVD8"/>
<dbReference type="KEGG" id="bcq:BCQ_3634"/>
<dbReference type="HOGENOM" id="CLU_000907_1_3_9"/>
<dbReference type="Proteomes" id="UP000000441">
    <property type="component" value="Chromosome"/>
</dbReference>
<dbReference type="GO" id="GO:0005737">
    <property type="term" value="C:cytoplasm"/>
    <property type="evidence" value="ECO:0007669"/>
    <property type="project" value="UniProtKB-SubCell"/>
</dbReference>
<dbReference type="GO" id="GO:0003725">
    <property type="term" value="F:double-stranded RNA binding"/>
    <property type="evidence" value="ECO:0007669"/>
    <property type="project" value="TreeGrafter"/>
</dbReference>
<dbReference type="GO" id="GO:0046872">
    <property type="term" value="F:metal ion binding"/>
    <property type="evidence" value="ECO:0007669"/>
    <property type="project" value="UniProtKB-KW"/>
</dbReference>
<dbReference type="GO" id="GO:0004525">
    <property type="term" value="F:ribonuclease III activity"/>
    <property type="evidence" value="ECO:0007669"/>
    <property type="project" value="UniProtKB-UniRule"/>
</dbReference>
<dbReference type="GO" id="GO:0019843">
    <property type="term" value="F:rRNA binding"/>
    <property type="evidence" value="ECO:0007669"/>
    <property type="project" value="UniProtKB-KW"/>
</dbReference>
<dbReference type="GO" id="GO:0006397">
    <property type="term" value="P:mRNA processing"/>
    <property type="evidence" value="ECO:0007669"/>
    <property type="project" value="UniProtKB-UniRule"/>
</dbReference>
<dbReference type="GO" id="GO:0010468">
    <property type="term" value="P:regulation of gene expression"/>
    <property type="evidence" value="ECO:0007669"/>
    <property type="project" value="TreeGrafter"/>
</dbReference>
<dbReference type="GO" id="GO:0006364">
    <property type="term" value="P:rRNA processing"/>
    <property type="evidence" value="ECO:0007669"/>
    <property type="project" value="UniProtKB-UniRule"/>
</dbReference>
<dbReference type="GO" id="GO:0008033">
    <property type="term" value="P:tRNA processing"/>
    <property type="evidence" value="ECO:0007669"/>
    <property type="project" value="UniProtKB-KW"/>
</dbReference>
<dbReference type="CDD" id="cd10845">
    <property type="entry name" value="DSRM_RNAse_III_family"/>
    <property type="match status" value="1"/>
</dbReference>
<dbReference type="CDD" id="cd00593">
    <property type="entry name" value="RIBOc"/>
    <property type="match status" value="1"/>
</dbReference>
<dbReference type="FunFam" id="1.10.1520.10:FF:000001">
    <property type="entry name" value="Ribonuclease 3"/>
    <property type="match status" value="1"/>
</dbReference>
<dbReference type="FunFam" id="3.30.160.20:FF:000003">
    <property type="entry name" value="Ribonuclease 3"/>
    <property type="match status" value="1"/>
</dbReference>
<dbReference type="Gene3D" id="3.30.160.20">
    <property type="match status" value="1"/>
</dbReference>
<dbReference type="Gene3D" id="1.10.1520.10">
    <property type="entry name" value="Ribonuclease III domain"/>
    <property type="match status" value="1"/>
</dbReference>
<dbReference type="HAMAP" id="MF_00104">
    <property type="entry name" value="RNase_III"/>
    <property type="match status" value="1"/>
</dbReference>
<dbReference type="InterPro" id="IPR014720">
    <property type="entry name" value="dsRBD_dom"/>
</dbReference>
<dbReference type="InterPro" id="IPR011907">
    <property type="entry name" value="RNase_III"/>
</dbReference>
<dbReference type="InterPro" id="IPR000999">
    <property type="entry name" value="RNase_III_dom"/>
</dbReference>
<dbReference type="InterPro" id="IPR036389">
    <property type="entry name" value="RNase_III_sf"/>
</dbReference>
<dbReference type="NCBIfam" id="TIGR02191">
    <property type="entry name" value="RNaseIII"/>
    <property type="match status" value="1"/>
</dbReference>
<dbReference type="PANTHER" id="PTHR11207:SF0">
    <property type="entry name" value="RIBONUCLEASE 3"/>
    <property type="match status" value="1"/>
</dbReference>
<dbReference type="PANTHER" id="PTHR11207">
    <property type="entry name" value="RIBONUCLEASE III"/>
    <property type="match status" value="1"/>
</dbReference>
<dbReference type="Pfam" id="PF00035">
    <property type="entry name" value="dsrm"/>
    <property type="match status" value="1"/>
</dbReference>
<dbReference type="Pfam" id="PF14622">
    <property type="entry name" value="Ribonucleas_3_3"/>
    <property type="match status" value="1"/>
</dbReference>
<dbReference type="SMART" id="SM00358">
    <property type="entry name" value="DSRM"/>
    <property type="match status" value="1"/>
</dbReference>
<dbReference type="SMART" id="SM00535">
    <property type="entry name" value="RIBOc"/>
    <property type="match status" value="1"/>
</dbReference>
<dbReference type="SUPFAM" id="SSF54768">
    <property type="entry name" value="dsRNA-binding domain-like"/>
    <property type="match status" value="1"/>
</dbReference>
<dbReference type="SUPFAM" id="SSF69065">
    <property type="entry name" value="RNase III domain-like"/>
    <property type="match status" value="1"/>
</dbReference>
<dbReference type="PROSITE" id="PS50137">
    <property type="entry name" value="DS_RBD"/>
    <property type="match status" value="1"/>
</dbReference>
<dbReference type="PROSITE" id="PS00517">
    <property type="entry name" value="RNASE_3_1"/>
    <property type="match status" value="1"/>
</dbReference>
<dbReference type="PROSITE" id="PS50142">
    <property type="entry name" value="RNASE_3_2"/>
    <property type="match status" value="1"/>
</dbReference>
<comment type="function">
    <text evidence="1">Digests double-stranded RNA. Involved in the processing of primary rRNA transcript to yield the immediate precursors to the large and small rRNAs (23S and 16S). Processes some mRNAs, and tRNAs when they are encoded in the rRNA operon. Processes pre-crRNA and tracrRNA of type II CRISPR loci if present in the organism.</text>
</comment>
<comment type="catalytic activity">
    <reaction evidence="1">
        <text>Endonucleolytic cleavage to 5'-phosphomonoester.</text>
        <dbReference type="EC" id="3.1.26.3"/>
    </reaction>
</comment>
<comment type="cofactor">
    <cofactor evidence="1">
        <name>Mg(2+)</name>
        <dbReference type="ChEBI" id="CHEBI:18420"/>
    </cofactor>
</comment>
<comment type="subunit">
    <text evidence="1">Homodimer.</text>
</comment>
<comment type="subcellular location">
    <subcellularLocation>
        <location evidence="1">Cytoplasm</location>
    </subcellularLocation>
</comment>
<comment type="similarity">
    <text evidence="1">Belongs to the ribonuclease III family.</text>
</comment>
<feature type="chain" id="PRO_1000194412" description="Ribonuclease 3">
    <location>
        <begin position="1"/>
        <end position="245"/>
    </location>
</feature>
<feature type="domain" description="RNase III" evidence="1">
    <location>
        <begin position="19"/>
        <end position="148"/>
    </location>
</feature>
<feature type="domain" description="DRBM" evidence="1">
    <location>
        <begin position="174"/>
        <end position="243"/>
    </location>
</feature>
<feature type="active site" evidence="1">
    <location>
        <position position="65"/>
    </location>
</feature>
<feature type="active site" evidence="1">
    <location>
        <position position="137"/>
    </location>
</feature>
<feature type="binding site" evidence="1">
    <location>
        <position position="61"/>
    </location>
    <ligand>
        <name>Mg(2+)</name>
        <dbReference type="ChEBI" id="CHEBI:18420"/>
    </ligand>
</feature>
<feature type="binding site" evidence="1">
    <location>
        <position position="134"/>
    </location>
    <ligand>
        <name>Mg(2+)</name>
        <dbReference type="ChEBI" id="CHEBI:18420"/>
    </ligand>
</feature>
<feature type="binding site" evidence="1">
    <location>
        <position position="137"/>
    </location>
    <ligand>
        <name>Mg(2+)</name>
        <dbReference type="ChEBI" id="CHEBI:18420"/>
    </ligand>
</feature>
<name>RNC_BACCQ</name>
<keyword id="KW-0963">Cytoplasm</keyword>
<keyword id="KW-0255">Endonuclease</keyword>
<keyword id="KW-0378">Hydrolase</keyword>
<keyword id="KW-0460">Magnesium</keyword>
<keyword id="KW-0479">Metal-binding</keyword>
<keyword id="KW-0507">mRNA processing</keyword>
<keyword id="KW-0540">Nuclease</keyword>
<keyword id="KW-0694">RNA-binding</keyword>
<keyword id="KW-0698">rRNA processing</keyword>
<keyword id="KW-0699">rRNA-binding</keyword>
<keyword id="KW-0819">tRNA processing</keyword>
<protein>
    <recommendedName>
        <fullName evidence="1">Ribonuclease 3</fullName>
        <ecNumber evidence="1">3.1.26.3</ecNumber>
    </recommendedName>
    <alternativeName>
        <fullName evidence="1">Ribonuclease III</fullName>
        <shortName evidence="1">RNase III</shortName>
    </alternativeName>
</protein>
<evidence type="ECO:0000255" key="1">
    <source>
        <dbReference type="HAMAP-Rule" id="MF_00104"/>
    </source>
</evidence>
<sequence length="245" mass="27979">MPYRKYREKKYETKYREAFKVFQEKIGITFTDEKLLIQAFTHSSYVNEHRKKPHEDNERLEFLGDAVLELTVSQYLFQKYPTMSEGELTKLRAAIVCEPSLVRFANELSFGSLVLLGKGEEMTGGRERPALLADVFEAFIGALYLDQGLETVWGFLKEIVYPKINEGAFSHVMDYKSQLQELIQRDGSGNIEYQILQEKGPAHNREFVSRVTLNNVALGLGSGKSKKEAEQQAAAEALKKLKEQL</sequence>
<gene>
    <name evidence="1" type="primary">rnc</name>
    <name type="ordered locus">BCQ_3634</name>
</gene>
<organism>
    <name type="scientific">Bacillus cereus (strain Q1)</name>
    <dbReference type="NCBI Taxonomy" id="361100"/>
    <lineage>
        <taxon>Bacteria</taxon>
        <taxon>Bacillati</taxon>
        <taxon>Bacillota</taxon>
        <taxon>Bacilli</taxon>
        <taxon>Bacillales</taxon>
        <taxon>Bacillaceae</taxon>
        <taxon>Bacillus</taxon>
        <taxon>Bacillus cereus group</taxon>
    </lineage>
</organism>
<proteinExistence type="inferred from homology"/>